<dbReference type="EC" id="1.14.99.46" evidence="1"/>
<dbReference type="EMBL" id="CP001164">
    <property type="protein sequence ID" value="ACI37467.1"/>
    <property type="molecule type" value="Genomic_DNA"/>
</dbReference>
<dbReference type="RefSeq" id="WP_001301233.1">
    <property type="nucleotide sequence ID" value="NC_011353.1"/>
</dbReference>
<dbReference type="SMR" id="B5YU53"/>
<dbReference type="KEGG" id="ecf:ECH74115_1249"/>
<dbReference type="HOGENOM" id="CLU_027853_1_1_6"/>
<dbReference type="GO" id="GO:0008726">
    <property type="term" value="F:alkanesulfonate monooxygenase activity"/>
    <property type="evidence" value="ECO:0007669"/>
    <property type="project" value="TreeGrafter"/>
</dbReference>
<dbReference type="GO" id="GO:0052614">
    <property type="term" value="F:uracil oxygenase activity"/>
    <property type="evidence" value="ECO:0007669"/>
    <property type="project" value="UniProtKB-EC"/>
</dbReference>
<dbReference type="GO" id="GO:0046306">
    <property type="term" value="P:alkanesulfonate catabolic process"/>
    <property type="evidence" value="ECO:0007669"/>
    <property type="project" value="TreeGrafter"/>
</dbReference>
<dbReference type="GO" id="GO:0019740">
    <property type="term" value="P:nitrogen utilization"/>
    <property type="evidence" value="ECO:0007669"/>
    <property type="project" value="UniProtKB-UniRule"/>
</dbReference>
<dbReference type="GO" id="GO:0006212">
    <property type="term" value="P:uracil catabolic process"/>
    <property type="evidence" value="ECO:0007669"/>
    <property type="project" value="UniProtKB-UniRule"/>
</dbReference>
<dbReference type="CDD" id="cd01094">
    <property type="entry name" value="Alkanesulfonate_monoxygenase"/>
    <property type="match status" value="1"/>
</dbReference>
<dbReference type="FunFam" id="3.20.20.30:FF:000003">
    <property type="entry name" value="Pyrimidine monooxygenase RutA"/>
    <property type="match status" value="1"/>
</dbReference>
<dbReference type="Gene3D" id="3.20.20.30">
    <property type="entry name" value="Luciferase-like domain"/>
    <property type="match status" value="1"/>
</dbReference>
<dbReference type="HAMAP" id="MF_01699">
    <property type="entry name" value="RutA"/>
    <property type="match status" value="1"/>
</dbReference>
<dbReference type="InterPro" id="IPR011251">
    <property type="entry name" value="Luciferase-like_dom"/>
</dbReference>
<dbReference type="InterPro" id="IPR036661">
    <property type="entry name" value="Luciferase-like_sf"/>
</dbReference>
<dbReference type="InterPro" id="IPR019914">
    <property type="entry name" value="Pyrimidine_monooxygenase_RutA"/>
</dbReference>
<dbReference type="InterPro" id="IPR050172">
    <property type="entry name" value="SsuD_RutA_monooxygenase"/>
</dbReference>
<dbReference type="NCBIfam" id="TIGR03612">
    <property type="entry name" value="RutA"/>
    <property type="match status" value="1"/>
</dbReference>
<dbReference type="PANTHER" id="PTHR42847">
    <property type="entry name" value="ALKANESULFONATE MONOOXYGENASE"/>
    <property type="match status" value="1"/>
</dbReference>
<dbReference type="PANTHER" id="PTHR42847:SF4">
    <property type="entry name" value="ALKANESULFONATE MONOOXYGENASE-RELATED"/>
    <property type="match status" value="1"/>
</dbReference>
<dbReference type="Pfam" id="PF00296">
    <property type="entry name" value="Bac_luciferase"/>
    <property type="match status" value="1"/>
</dbReference>
<dbReference type="SUPFAM" id="SSF51679">
    <property type="entry name" value="Bacterial luciferase-like"/>
    <property type="match status" value="1"/>
</dbReference>
<feature type="chain" id="PRO_0000402609" description="Pyrimidine monooxygenase RutA">
    <location>
        <begin position="1"/>
        <end position="363"/>
    </location>
</feature>
<feature type="binding site" evidence="1">
    <location>
        <begin position="49"/>
        <end position="50"/>
    </location>
    <ligand>
        <name>FMN</name>
        <dbReference type="ChEBI" id="CHEBI:58210"/>
    </ligand>
</feature>
<feature type="binding site" evidence="1">
    <location>
        <position position="115"/>
    </location>
    <ligand>
        <name>FMN</name>
        <dbReference type="ChEBI" id="CHEBI:58210"/>
    </ligand>
</feature>
<feature type="binding site" evidence="1">
    <location>
        <position position="124"/>
    </location>
    <ligand>
        <name>FMN</name>
        <dbReference type="ChEBI" id="CHEBI:58210"/>
    </ligand>
</feature>
<feature type="binding site" evidence="1">
    <location>
        <begin position="140"/>
        <end position="141"/>
    </location>
    <ligand>
        <name>FMN</name>
        <dbReference type="ChEBI" id="CHEBI:58210"/>
    </ligand>
</feature>
<feature type="binding site" evidence="1">
    <location>
        <position position="190"/>
    </location>
    <ligand>
        <name>FMN</name>
        <dbReference type="ChEBI" id="CHEBI:58210"/>
    </ligand>
</feature>
<name>RUTA_ECO5E</name>
<evidence type="ECO:0000255" key="1">
    <source>
        <dbReference type="HAMAP-Rule" id="MF_01699"/>
    </source>
</evidence>
<gene>
    <name evidence="1" type="primary">rutA</name>
    <name type="ordered locus">ECH74115_1249</name>
</gene>
<organism>
    <name type="scientific">Escherichia coli O157:H7 (strain EC4115 / EHEC)</name>
    <dbReference type="NCBI Taxonomy" id="444450"/>
    <lineage>
        <taxon>Bacteria</taxon>
        <taxon>Pseudomonadati</taxon>
        <taxon>Pseudomonadota</taxon>
        <taxon>Gammaproteobacteria</taxon>
        <taxon>Enterobacterales</taxon>
        <taxon>Enterobacteriaceae</taxon>
        <taxon>Escherichia</taxon>
    </lineage>
</organism>
<sequence>MKIGVFVPIGNNGWLISTHAPQYMPTFELNKAIVQKAEHYHFDFALSMIKLRGFGGKTEFWDHNLESFTLMAGLAAVTSRIQIYATAATLTLPPAIVARMAATIDSISGGRFGVNLVTGWQKPEYEQMGIWPGDDYFSRRYDYLTEYVQVLRDLWGTGKSDFKGDFFTMNDCRVSPQPSVPMKVICAGQSDAGMAFSAQYADFNFCFGKGVNTPTAFAPTAARMKQAAEQTGRDVGSYVLFMVIADETDDAARAKWEHYKAGADEEALSWLTEQSQKDTRSGTDTNVRQMADPTSAVNINMGTLVGSYASVARMLDEVASVPGAEGVLLTFDDFLSGIETFGERIQPLMQCRAHLPVLTQEVA</sequence>
<reference key="1">
    <citation type="journal article" date="2011" name="Proc. Natl. Acad. Sci. U.S.A.">
        <title>Genomic anatomy of Escherichia coli O157:H7 outbreaks.</title>
        <authorList>
            <person name="Eppinger M."/>
            <person name="Mammel M.K."/>
            <person name="Leclerc J.E."/>
            <person name="Ravel J."/>
            <person name="Cebula T.A."/>
        </authorList>
    </citation>
    <scope>NUCLEOTIDE SEQUENCE [LARGE SCALE GENOMIC DNA]</scope>
    <source>
        <strain>EC4115 / EHEC</strain>
    </source>
</reference>
<keyword id="KW-0285">Flavoprotein</keyword>
<keyword id="KW-0288">FMN</keyword>
<keyword id="KW-0503">Monooxygenase</keyword>
<keyword id="KW-0521">NADP</keyword>
<keyword id="KW-0560">Oxidoreductase</keyword>
<protein>
    <recommendedName>
        <fullName evidence="1">Pyrimidine monooxygenase RutA</fullName>
        <ecNumber evidence="1">1.14.99.46</ecNumber>
    </recommendedName>
</protein>
<accession>B5YU53</accession>
<proteinExistence type="inferred from homology"/>
<comment type="function">
    <text evidence="1">Catalyzes the pyrimidine ring opening between N-3 and C-4 by an unusual flavin hydroperoxide-catalyzed mechanism, adding oxygen atoms in the process to yield ureidoacrylate peracid, that immediately reacts with FMN forming ureidoacrylate and FMN-N(5)-oxide. The FMN-N(5)-oxide reacts spontaneously with NADH to produce FMN. Requires the flavin reductase RutF to regenerate FMN in vivo.</text>
</comment>
<comment type="catalytic activity">
    <reaction evidence="1">
        <text>uracil + FMNH2 + NADH + O2 = (Z)-3-ureidoacrylate + FMN + NAD(+) + H2O + H(+)</text>
        <dbReference type="Rhea" id="RHEA:31587"/>
        <dbReference type="ChEBI" id="CHEBI:15377"/>
        <dbReference type="ChEBI" id="CHEBI:15378"/>
        <dbReference type="ChEBI" id="CHEBI:15379"/>
        <dbReference type="ChEBI" id="CHEBI:17568"/>
        <dbReference type="ChEBI" id="CHEBI:57540"/>
        <dbReference type="ChEBI" id="CHEBI:57618"/>
        <dbReference type="ChEBI" id="CHEBI:57945"/>
        <dbReference type="ChEBI" id="CHEBI:58210"/>
        <dbReference type="ChEBI" id="CHEBI:59891"/>
        <dbReference type="EC" id="1.14.99.46"/>
    </reaction>
</comment>
<comment type="catalytic activity">
    <reaction evidence="1">
        <text>thymine + FMNH2 + NADH + O2 = (Z)-2-methylureidoacrylate + FMN + NAD(+) + H2O + H(+)</text>
        <dbReference type="Rhea" id="RHEA:31599"/>
        <dbReference type="ChEBI" id="CHEBI:15377"/>
        <dbReference type="ChEBI" id="CHEBI:15378"/>
        <dbReference type="ChEBI" id="CHEBI:15379"/>
        <dbReference type="ChEBI" id="CHEBI:17821"/>
        <dbReference type="ChEBI" id="CHEBI:57540"/>
        <dbReference type="ChEBI" id="CHEBI:57618"/>
        <dbReference type="ChEBI" id="CHEBI:57945"/>
        <dbReference type="ChEBI" id="CHEBI:58210"/>
        <dbReference type="ChEBI" id="CHEBI:143783"/>
        <dbReference type="EC" id="1.14.99.46"/>
    </reaction>
</comment>
<comment type="induction">
    <text evidence="1">Up-regulated by the nitrogen regulatory protein C (NtrC also called GlnG) and repressed by RutR.</text>
</comment>
<comment type="similarity">
    <text evidence="1">Belongs to the NtaA/SnaA/DszA monooxygenase family. RutA subfamily.</text>
</comment>